<proteinExistence type="evidence at protein level"/>
<name>IKBZ_HUMAN</name>
<comment type="function">
    <text evidence="2 5 6">Involved in regulation of NF-kappa-B transcription factor complexes (PubMed:16513645, PubMed:16622025). Inhibits NF-kappa-B activity without affecting its nuclear translocation upon stimulation (PubMed:16513645). Inhibits DNA-binding of RELA and NFKB1/p50, and of the NF-kappa-B p65-p50 heterodimer and the NF-kappa-B p50-p50 homodimer (PubMed:16513645). Also seems to activate NF-kappa-B-mediated transcription (PubMed:16622025). In vitro, upon association with NFKB1/p50 has transcriptional activation activity and, together with NFKB1/p50 and RELA, is recruited to LCN2 promoters (PubMed:16622025). Promotes transcription of LCN2 and DEFB4 (PubMed:16622025). Is recruited to IL-6 promoters and activates IL-6 but decreases TNF-alpha production in response to LPS (By similarity). Seems to be involved in the induction of inflammatory genes activated through TLR/IL-1 receptor signaling (By similarity). Involved in the induction of T helper 17 cells (Th17) differentiation upon recognition of antigen by T cell antigen receptor (TCR) (By similarity).</text>
</comment>
<comment type="subunit">
    <text evidence="2 5">Interacts with NFKB1/p50 (PubMed:16513645). Interacts with RELA (PubMed:16513645). Interacts with AKIRIN2 (By similarity).</text>
</comment>
<comment type="interaction">
    <interactant intactId="EBI-3939694">
        <id>Q9BYH8</id>
    </interactant>
    <interactant intactId="EBI-10107866">
        <id>B1AXD8</id>
        <label>Akirin2</label>
    </interactant>
    <organismsDiffer>true</organismsDiffer>
    <experiments>3</experiments>
</comment>
<comment type="subcellular location">
    <subcellularLocation>
        <location evidence="5">Nucleus</location>
    </subcellularLocation>
    <text evidence="5">Aggregated in dot-like structures (PubMed:16513645). Colocalizes with NCOR2 (PubMed:16513645).</text>
</comment>
<comment type="alternative products">
    <event type="alternative splicing"/>
    <isoform>
        <id>Q9BYH8-1</id>
        <name>1</name>
        <name>MAIL-L</name>
        <sequence type="displayed"/>
    </isoform>
    <isoform>
        <id>Q9BYH8-2</id>
        <name>2</name>
        <name>MAIL-S</name>
        <name>Transcription variant 3</name>
        <sequence type="described" ref="VSP_032022"/>
    </isoform>
    <isoform>
        <id>Q9BYH8-3</id>
        <name>3</name>
        <sequence type="described" ref="VSP_032023"/>
    </isoform>
</comment>
<comment type="tissue specificity">
    <text evidence="5">Expressed at high levels in peripheral blood leukocytes and lung, at moderate levels in liver, placenta, and at low levels in spleen, kidney, skeletal muscle and heart.</text>
</comment>
<comment type="induction">
    <text evidence="5">By TNF, IL1/interleukin-1 and bacterial lipopolysaccharides (LPS).</text>
</comment>
<accession>Q9BYH8</accession>
<accession>B3KNR2</accession>
<accession>D3DN54</accession>
<accession>Q8IUL4</accession>
<accession>Q8NAZ8</accession>
<reference key="1">
    <citation type="submission" date="2000-02" db="EMBL/GenBank/DDBJ databases">
        <title>Human MAIL: an inflammation-associated gene that is induced by lipopolysaccharide in leukocytes.</title>
        <authorList>
            <person name="Ochiai K."/>
            <person name="Morimatsu M."/>
            <person name="Kitamura H."/>
            <person name="Shiina T."/>
            <person name="Syuto B."/>
        </authorList>
    </citation>
    <scope>NUCLEOTIDE SEQUENCE [MRNA] (ISOFORM 1)</scope>
    <source>
        <tissue>Peripheral blood</tissue>
    </source>
</reference>
<reference key="2">
    <citation type="submission" date="2002-09" db="EMBL/GenBank/DDBJ databases">
        <title>MAIL a novel IkB family member is induced by lipopolysaccharide in human monocytes and binds proIL-1beta.</title>
        <authorList>
            <person name="Parker-Barnes J.M."/>
            <person name="Yee J.F."/>
            <person name="Hart J.M."/>
            <person name="Doseff A.I."/>
            <person name="Wewers M.D."/>
        </authorList>
    </citation>
    <scope>NUCLEOTIDE SEQUENCE [MRNA] (ISOFORM 2)</scope>
    <source>
        <tissue>Monocyte</tissue>
    </source>
</reference>
<reference key="3">
    <citation type="journal article" date="2006" name="J. Biol. Chem.">
        <title>A novel member of the IkappaB family, human IkappaB-zeta, inhibits transactivation of p65 and its DNA binding.</title>
        <authorList>
            <person name="Totzke G."/>
            <person name="Essmann F."/>
            <person name="Pohlmann S."/>
            <person name="Lindenblatt C."/>
            <person name="Janicke R.U."/>
            <person name="Schulze-Osthoff K."/>
        </authorList>
    </citation>
    <scope>NUCLEOTIDE SEQUENCE [MRNA] (ISOFORM 2)</scope>
    <scope>FUNCTION IN NF-KAPPA-B INHIBITION</scope>
    <scope>SUBCELLULAR LOCATION</scope>
    <scope>TISSUE SPECIFICITY</scope>
    <scope>INTERACTION WITH RELA AND NFKB1</scope>
    <scope>INDUCTION</scope>
</reference>
<reference key="4">
    <citation type="journal article" date="2004" name="Nat. Genet.">
        <title>Complete sequencing and characterization of 21,243 full-length human cDNAs.</title>
        <authorList>
            <person name="Ota T."/>
            <person name="Suzuki Y."/>
            <person name="Nishikawa T."/>
            <person name="Otsuki T."/>
            <person name="Sugiyama T."/>
            <person name="Irie R."/>
            <person name="Wakamatsu A."/>
            <person name="Hayashi K."/>
            <person name="Sato H."/>
            <person name="Nagai K."/>
            <person name="Kimura K."/>
            <person name="Makita H."/>
            <person name="Sekine M."/>
            <person name="Obayashi M."/>
            <person name="Nishi T."/>
            <person name="Shibahara T."/>
            <person name="Tanaka T."/>
            <person name="Ishii S."/>
            <person name="Yamamoto J."/>
            <person name="Saito K."/>
            <person name="Kawai Y."/>
            <person name="Isono Y."/>
            <person name="Nakamura Y."/>
            <person name="Nagahari K."/>
            <person name="Murakami K."/>
            <person name="Yasuda T."/>
            <person name="Iwayanagi T."/>
            <person name="Wagatsuma M."/>
            <person name="Shiratori A."/>
            <person name="Sudo H."/>
            <person name="Hosoiri T."/>
            <person name="Kaku Y."/>
            <person name="Kodaira H."/>
            <person name="Kondo H."/>
            <person name="Sugawara M."/>
            <person name="Takahashi M."/>
            <person name="Kanda K."/>
            <person name="Yokoi T."/>
            <person name="Furuya T."/>
            <person name="Kikkawa E."/>
            <person name="Omura Y."/>
            <person name="Abe K."/>
            <person name="Kamihara K."/>
            <person name="Katsuta N."/>
            <person name="Sato K."/>
            <person name="Tanikawa M."/>
            <person name="Yamazaki M."/>
            <person name="Ninomiya K."/>
            <person name="Ishibashi T."/>
            <person name="Yamashita H."/>
            <person name="Murakawa K."/>
            <person name="Fujimori K."/>
            <person name="Tanai H."/>
            <person name="Kimata M."/>
            <person name="Watanabe M."/>
            <person name="Hiraoka S."/>
            <person name="Chiba Y."/>
            <person name="Ishida S."/>
            <person name="Ono Y."/>
            <person name="Takiguchi S."/>
            <person name="Watanabe S."/>
            <person name="Yosida M."/>
            <person name="Hotuta T."/>
            <person name="Kusano J."/>
            <person name="Kanehori K."/>
            <person name="Takahashi-Fujii A."/>
            <person name="Hara H."/>
            <person name="Tanase T.-O."/>
            <person name="Nomura Y."/>
            <person name="Togiya S."/>
            <person name="Komai F."/>
            <person name="Hara R."/>
            <person name="Takeuchi K."/>
            <person name="Arita M."/>
            <person name="Imose N."/>
            <person name="Musashino K."/>
            <person name="Yuuki H."/>
            <person name="Oshima A."/>
            <person name="Sasaki N."/>
            <person name="Aotsuka S."/>
            <person name="Yoshikawa Y."/>
            <person name="Matsunawa H."/>
            <person name="Ichihara T."/>
            <person name="Shiohata N."/>
            <person name="Sano S."/>
            <person name="Moriya S."/>
            <person name="Momiyama H."/>
            <person name="Satoh N."/>
            <person name="Takami S."/>
            <person name="Terashima Y."/>
            <person name="Suzuki O."/>
            <person name="Nakagawa S."/>
            <person name="Senoh A."/>
            <person name="Mizoguchi H."/>
            <person name="Goto Y."/>
            <person name="Shimizu F."/>
            <person name="Wakebe H."/>
            <person name="Hishigaki H."/>
            <person name="Watanabe T."/>
            <person name="Sugiyama A."/>
            <person name="Takemoto M."/>
            <person name="Kawakami B."/>
            <person name="Yamazaki M."/>
            <person name="Watanabe K."/>
            <person name="Kumagai A."/>
            <person name="Itakura S."/>
            <person name="Fukuzumi Y."/>
            <person name="Fujimori Y."/>
            <person name="Komiyama M."/>
            <person name="Tashiro H."/>
            <person name="Tanigami A."/>
            <person name="Fujiwara T."/>
            <person name="Ono T."/>
            <person name="Yamada K."/>
            <person name="Fujii Y."/>
            <person name="Ozaki K."/>
            <person name="Hirao M."/>
            <person name="Ohmori Y."/>
            <person name="Kawabata A."/>
            <person name="Hikiji T."/>
            <person name="Kobatake N."/>
            <person name="Inagaki H."/>
            <person name="Ikema Y."/>
            <person name="Okamoto S."/>
            <person name="Okitani R."/>
            <person name="Kawakami T."/>
            <person name="Noguchi S."/>
            <person name="Itoh T."/>
            <person name="Shigeta K."/>
            <person name="Senba T."/>
            <person name="Matsumura K."/>
            <person name="Nakajima Y."/>
            <person name="Mizuno T."/>
            <person name="Morinaga M."/>
            <person name="Sasaki M."/>
            <person name="Togashi T."/>
            <person name="Oyama M."/>
            <person name="Hata H."/>
            <person name="Watanabe M."/>
            <person name="Komatsu T."/>
            <person name="Mizushima-Sugano J."/>
            <person name="Satoh T."/>
            <person name="Shirai Y."/>
            <person name="Takahashi Y."/>
            <person name="Nakagawa K."/>
            <person name="Okumura K."/>
            <person name="Nagase T."/>
            <person name="Nomura N."/>
            <person name="Kikuchi H."/>
            <person name="Masuho Y."/>
            <person name="Yamashita R."/>
            <person name="Nakai K."/>
            <person name="Yada T."/>
            <person name="Nakamura Y."/>
            <person name="Ohara O."/>
            <person name="Isogai T."/>
            <person name="Sugano S."/>
        </authorList>
    </citation>
    <scope>NUCLEOTIDE SEQUENCE [LARGE SCALE MRNA] (ISOFORMS 2 AND 3)</scope>
    <source>
        <tissue>Cerebellum</tissue>
        <tissue>Lung</tissue>
    </source>
</reference>
<reference key="5">
    <citation type="submission" date="2005-09" db="EMBL/GenBank/DDBJ databases">
        <authorList>
            <person name="Mural R.J."/>
            <person name="Istrail S."/>
            <person name="Sutton G.G."/>
            <person name="Florea L."/>
            <person name="Halpern A.L."/>
            <person name="Mobarry C.M."/>
            <person name="Lippert R."/>
            <person name="Walenz B."/>
            <person name="Shatkay H."/>
            <person name="Dew I."/>
            <person name="Miller J.R."/>
            <person name="Flanigan M.J."/>
            <person name="Edwards N.J."/>
            <person name="Bolanos R."/>
            <person name="Fasulo D."/>
            <person name="Halldorsson B.V."/>
            <person name="Hannenhalli S."/>
            <person name="Turner R."/>
            <person name="Yooseph S."/>
            <person name="Lu F."/>
            <person name="Nusskern D.R."/>
            <person name="Shue B.C."/>
            <person name="Zheng X.H."/>
            <person name="Zhong F."/>
            <person name="Delcher A.L."/>
            <person name="Huson D.H."/>
            <person name="Kravitz S.A."/>
            <person name="Mouchard L."/>
            <person name="Reinert K."/>
            <person name="Remington K.A."/>
            <person name="Clark A.G."/>
            <person name="Waterman M.S."/>
            <person name="Eichler E.E."/>
            <person name="Adams M.D."/>
            <person name="Hunkapiller M.W."/>
            <person name="Myers E.W."/>
            <person name="Venter J.C."/>
        </authorList>
    </citation>
    <scope>NUCLEOTIDE SEQUENCE [LARGE SCALE GENOMIC DNA]</scope>
</reference>
<reference key="6">
    <citation type="journal article" date="2004" name="Genome Res.">
        <title>The status, quality, and expansion of the NIH full-length cDNA project: the Mammalian Gene Collection (MGC).</title>
        <authorList>
            <consortium name="The MGC Project Team"/>
        </authorList>
    </citation>
    <scope>NUCLEOTIDE SEQUENCE [LARGE SCALE MRNA] (ISOFORM 1)</scope>
    <source>
        <tissue>Placenta</tissue>
    </source>
</reference>
<reference key="7">
    <citation type="journal article" date="2006" name="J. Immunol.">
        <title>IL-1beta-specific up-regulation of neutrophil gelatinase-associated lipocalin is controlled by IkappaB-zeta.</title>
        <authorList>
            <person name="Cowland J.B."/>
            <person name="Muta T."/>
            <person name="Borregaard N."/>
        </authorList>
    </citation>
    <scope>FUNCTION IN NF-KAPPA-B ACTIVATION</scope>
</reference>
<reference key="8">
    <citation type="journal article" date="2012" name="Proc. Natl. Acad. Sci. U.S.A.">
        <title>N-terminal acetylome analyses and functional insights of the N-terminal acetyltransferase NatB.</title>
        <authorList>
            <person name="Van Damme P."/>
            <person name="Lasa M."/>
            <person name="Polevoda B."/>
            <person name="Gazquez C."/>
            <person name="Elosegui-Artola A."/>
            <person name="Kim D.S."/>
            <person name="De Juan-Pardo E."/>
            <person name="Demeyer K."/>
            <person name="Hole K."/>
            <person name="Larrea E."/>
            <person name="Timmerman E."/>
            <person name="Prieto J."/>
            <person name="Arnesen T."/>
            <person name="Sherman F."/>
            <person name="Gevaert K."/>
            <person name="Aldabe R."/>
        </authorList>
    </citation>
    <scope>IDENTIFICATION BY MASS SPECTROMETRY [LARGE SCALE ANALYSIS]</scope>
</reference>
<protein>
    <recommendedName>
        <fullName>NF-kappa-B inhibitor zeta</fullName>
    </recommendedName>
    <alternativeName>
        <fullName>I-kappa-B-zeta</fullName>
        <shortName>IkB-zeta</shortName>
        <shortName>IkappaBzeta</shortName>
    </alternativeName>
    <alternativeName>
        <fullName>IL-1 inducible nuclear ankyrin-repeat protein</fullName>
        <shortName>INAP</shortName>
    </alternativeName>
    <alternativeName>
        <fullName evidence="9">Molecule possessing ankyrin repeats induced by lipopolysaccharide</fullName>
        <shortName evidence="9">MAIL</shortName>
    </alternativeName>
</protein>
<evidence type="ECO:0000250" key="1"/>
<evidence type="ECO:0000250" key="2">
    <source>
        <dbReference type="UniProtKB" id="Q9EST8"/>
    </source>
</evidence>
<evidence type="ECO:0000255" key="3">
    <source>
        <dbReference type="PROSITE-ProRule" id="PRU01347"/>
    </source>
</evidence>
<evidence type="ECO:0000256" key="4">
    <source>
        <dbReference type="SAM" id="MobiDB-lite"/>
    </source>
</evidence>
<evidence type="ECO:0000269" key="5">
    <source>
    </source>
</evidence>
<evidence type="ECO:0000269" key="6">
    <source>
    </source>
</evidence>
<evidence type="ECO:0000303" key="7">
    <source>
    </source>
</evidence>
<evidence type="ECO:0000303" key="8">
    <source>
    </source>
</evidence>
<evidence type="ECO:0000303" key="9">
    <source ref="1"/>
</evidence>
<evidence type="ECO:0000303" key="10">
    <source ref="2"/>
</evidence>
<evidence type="ECO:0000305" key="11"/>
<evidence type="ECO:0007829" key="12">
    <source>
        <dbReference type="PDB" id="9BOR"/>
    </source>
</evidence>
<sequence>MIVDKLLDDSRGGEGLRDAAGGCGLMTSPLNLSYFYGASPPAAAPGACDASCSVLGPSAPGSPGSDSSDFSSASSVSSCGAVESRSRGGARAERQPVEPHMGVGRQQRGPFQGVRVKNSVKELLLHIRSHKQKASGQAVDDFKTQGVNIEQFRELKNTVSYSGKRKGPDSLSDGPACKRPALLHSQFLTPPQTPTPGESMEDVHLNEPKQESSADLLQNIINIKNECSPVSLNTVQVSWLNPVVVPQSSPAEQCQDFHGGQVFSPPQKCQPFQVRGSQQMIDQASLYQYSPQNQHVEQQPHYTHKPTLEYSPFPIPPQSPAYEPNLFDGPESQFCPNQSLVSLLGDQRESENIANPMQTSSSVQQQNDAHLHSFSMMPSSACEAMVGHEMASDSSNTSLPFSNMGNPMNTTQLGKSLFQWQVEQEESKLANISQDQFLSKDADGDTFLHIAVAQGRRALSYVLARKMNALHMLDIKEHNGQSAFQVAVAANQHLIVQDLVNIGAQVNTTDCWGRTPLHVCAEKGHSQVLQAIQKGAVGSNQFVDLEATNYDGLTPLHCAVIAHNAVVHELQRNQQPHSPEVQELLLKNKSLVDTIKCLIQMGAAVEAKDRKSGRTALHLAAEEANLELIRLFLELPSCLSFVNAKAYNGNTALHVAASLQYRLTQLDAVRLLMRKGADPSTRNLENEQPVHLVPDGPVGEQIRRILKGKSIQQRAPPY</sequence>
<keyword id="KW-0002">3D-structure</keyword>
<keyword id="KW-0010">Activator</keyword>
<keyword id="KW-0025">Alternative splicing</keyword>
<keyword id="KW-0040">ANK repeat</keyword>
<keyword id="KW-0539">Nucleus</keyword>
<keyword id="KW-1267">Proteomics identification</keyword>
<keyword id="KW-1185">Reference proteome</keyword>
<keyword id="KW-0677">Repeat</keyword>
<keyword id="KW-0678">Repressor</keyword>
<keyword id="KW-0804">Transcription</keyword>
<keyword id="KW-0805">Transcription regulation</keyword>
<gene>
    <name type="primary">NFKBIZ</name>
    <name type="synonym">IKBZ</name>
    <name type="synonym">INAP</name>
    <name evidence="9" type="synonym">MAIL</name>
</gene>
<feature type="chain" id="PRO_0000323577" description="NF-kappa-B inhibitor zeta">
    <location>
        <begin position="1"/>
        <end position="718"/>
    </location>
</feature>
<feature type="domain" description="OCA" evidence="3">
    <location>
        <begin position="108"/>
        <end position="130"/>
    </location>
</feature>
<feature type="repeat" description="ANK 1">
    <location>
        <begin position="443"/>
        <end position="472"/>
    </location>
</feature>
<feature type="repeat" description="ANK 2">
    <location>
        <begin position="479"/>
        <end position="508"/>
    </location>
</feature>
<feature type="repeat" description="ANK 3">
    <location>
        <begin position="512"/>
        <end position="541"/>
    </location>
</feature>
<feature type="repeat" description="ANK 4">
    <location>
        <begin position="551"/>
        <end position="580"/>
    </location>
</feature>
<feature type="repeat" description="ANK 5">
    <location>
        <begin position="582"/>
        <end position="607"/>
    </location>
</feature>
<feature type="repeat" description="ANK 6">
    <location>
        <begin position="612"/>
        <end position="641"/>
    </location>
</feature>
<feature type="repeat" description="ANK 7">
    <location>
        <begin position="648"/>
        <end position="681"/>
    </location>
</feature>
<feature type="region of interest" description="Disordered" evidence="4">
    <location>
        <begin position="1"/>
        <end position="20"/>
    </location>
</feature>
<feature type="region of interest" description="Disordered" evidence="4">
    <location>
        <begin position="58"/>
        <end position="108"/>
    </location>
</feature>
<feature type="region of interest" description="Disordered" evidence="4">
    <location>
        <begin position="186"/>
        <end position="211"/>
    </location>
</feature>
<feature type="region of interest" description="Required for transcriptional activity" evidence="1">
    <location>
        <begin position="321"/>
        <end position="394"/>
    </location>
</feature>
<feature type="region of interest" description="Interaction with NFKB1/p50" evidence="1">
    <location>
        <begin position="404"/>
        <end position="718"/>
    </location>
</feature>
<feature type="short sequence motif" description="Nuclear localization signal" evidence="1">
    <location>
        <begin position="164"/>
        <end position="179"/>
    </location>
</feature>
<feature type="compositionally biased region" description="Basic and acidic residues" evidence="4">
    <location>
        <begin position="1"/>
        <end position="17"/>
    </location>
</feature>
<feature type="compositionally biased region" description="Low complexity" evidence="4">
    <location>
        <begin position="58"/>
        <end position="83"/>
    </location>
</feature>
<feature type="compositionally biased region" description="Basic and acidic residues" evidence="4">
    <location>
        <begin position="84"/>
        <end position="97"/>
    </location>
</feature>
<feature type="compositionally biased region" description="Basic and acidic residues" evidence="4">
    <location>
        <begin position="201"/>
        <end position="211"/>
    </location>
</feature>
<feature type="splice variant" id="VSP_032022" description="In isoform 2." evidence="7 8 10">
    <location>
        <begin position="1"/>
        <end position="100"/>
    </location>
</feature>
<feature type="splice variant" id="VSP_032023" description="In isoform 3." evidence="7">
    <location>
        <begin position="237"/>
        <end position="358"/>
    </location>
</feature>
<feature type="sequence variant" id="VAR_039547" description="In dbSNP:rs3821727.">
    <original>T</original>
    <variation>S</variation>
    <location>
        <position position="307"/>
    </location>
</feature>
<feature type="sequence conflict" description="In Ref. 4; BAC03746." evidence="11" ref="4">
    <original>V</original>
    <variation>F</variation>
    <location>
        <position position="567"/>
    </location>
</feature>
<feature type="helix" evidence="12">
    <location>
        <begin position="417"/>
        <end position="428"/>
    </location>
</feature>
<feature type="strand" evidence="12">
    <location>
        <begin position="430"/>
        <end position="432"/>
    </location>
</feature>
<feature type="strand" evidence="12">
    <location>
        <begin position="434"/>
        <end position="439"/>
    </location>
</feature>
<feature type="helix" evidence="12">
    <location>
        <begin position="447"/>
        <end position="454"/>
    </location>
</feature>
<feature type="helix" evidence="12">
    <location>
        <begin position="457"/>
        <end position="469"/>
    </location>
</feature>
<feature type="helix" evidence="12">
    <location>
        <begin position="483"/>
        <end position="489"/>
    </location>
</feature>
<feature type="helix" evidence="12">
    <location>
        <begin position="493"/>
        <end position="501"/>
    </location>
</feature>
<feature type="helix" evidence="12">
    <location>
        <begin position="516"/>
        <end position="523"/>
    </location>
</feature>
<feature type="helix" evidence="12">
    <location>
        <begin position="526"/>
        <end position="537"/>
    </location>
</feature>
<feature type="turn" evidence="12">
    <location>
        <begin position="538"/>
        <end position="540"/>
    </location>
</feature>
<feature type="helix" evidence="12">
    <location>
        <begin position="555"/>
        <end position="570"/>
    </location>
</feature>
<feature type="helix" evidence="12">
    <location>
        <begin position="579"/>
        <end position="601"/>
    </location>
</feature>
<feature type="turn" evidence="12">
    <location>
        <begin position="610"/>
        <end position="612"/>
    </location>
</feature>
<feature type="helix" evidence="12">
    <location>
        <begin position="616"/>
        <end position="622"/>
    </location>
</feature>
<feature type="helix" evidence="12">
    <location>
        <begin position="626"/>
        <end position="633"/>
    </location>
</feature>
<feature type="helix" evidence="12">
    <location>
        <begin position="638"/>
        <end position="641"/>
    </location>
</feature>
<feature type="helix" evidence="12">
    <location>
        <begin position="652"/>
        <end position="658"/>
    </location>
</feature>
<feature type="helix" evidence="12">
    <location>
        <begin position="665"/>
        <end position="674"/>
    </location>
</feature>
<feature type="helix" evidence="12">
    <location>
        <begin position="689"/>
        <end position="692"/>
    </location>
</feature>
<feature type="helix" evidence="12">
    <location>
        <begin position="697"/>
        <end position="707"/>
    </location>
</feature>
<organism>
    <name type="scientific">Homo sapiens</name>
    <name type="common">Human</name>
    <dbReference type="NCBI Taxonomy" id="9606"/>
    <lineage>
        <taxon>Eukaryota</taxon>
        <taxon>Metazoa</taxon>
        <taxon>Chordata</taxon>
        <taxon>Craniata</taxon>
        <taxon>Vertebrata</taxon>
        <taxon>Euteleostomi</taxon>
        <taxon>Mammalia</taxon>
        <taxon>Eutheria</taxon>
        <taxon>Euarchontoglires</taxon>
        <taxon>Primates</taxon>
        <taxon>Haplorrhini</taxon>
        <taxon>Catarrhini</taxon>
        <taxon>Hominidae</taxon>
        <taxon>Homo</taxon>
    </lineage>
</organism>
<dbReference type="EMBL" id="AB037925">
    <property type="protein sequence ID" value="BAB40337.1"/>
    <property type="molecule type" value="mRNA"/>
</dbReference>
<dbReference type="EMBL" id="AF548362">
    <property type="protein sequence ID" value="AAN40698.1"/>
    <property type="molecule type" value="mRNA"/>
</dbReference>
<dbReference type="EMBL" id="DQ224339">
    <property type="protein sequence ID" value="ABB02425.1"/>
    <property type="molecule type" value="mRNA"/>
</dbReference>
<dbReference type="EMBL" id="AK054787">
    <property type="protein sequence ID" value="BAG51424.1"/>
    <property type="molecule type" value="mRNA"/>
</dbReference>
<dbReference type="EMBL" id="AK091782">
    <property type="protein sequence ID" value="BAC03746.1"/>
    <property type="molecule type" value="mRNA"/>
</dbReference>
<dbReference type="EMBL" id="CH471052">
    <property type="protein sequence ID" value="EAW79771.1"/>
    <property type="molecule type" value="Genomic_DNA"/>
</dbReference>
<dbReference type="EMBL" id="CH471052">
    <property type="protein sequence ID" value="EAW79772.1"/>
    <property type="molecule type" value="Genomic_DNA"/>
</dbReference>
<dbReference type="EMBL" id="BC060800">
    <property type="protein sequence ID" value="AAH60800.1"/>
    <property type="molecule type" value="mRNA"/>
</dbReference>
<dbReference type="CCDS" id="CCDS2946.1">
    <molecule id="Q9BYH8-1"/>
</dbReference>
<dbReference type="CCDS" id="CCDS43123.1">
    <molecule id="Q9BYH8-2"/>
</dbReference>
<dbReference type="RefSeq" id="NP_001005474.1">
    <molecule id="Q9BYH8-2"/>
    <property type="nucleotide sequence ID" value="NM_001005474.3"/>
</dbReference>
<dbReference type="RefSeq" id="NP_113607.1">
    <molecule id="Q9BYH8-1"/>
    <property type="nucleotide sequence ID" value="NM_031419.4"/>
</dbReference>
<dbReference type="PDB" id="9BOR">
    <property type="method" value="X-ray"/>
    <property type="resolution" value="2.00 A"/>
    <property type="chains" value="A=404-718"/>
</dbReference>
<dbReference type="PDBsum" id="9BOR"/>
<dbReference type="SMR" id="Q9BYH8"/>
<dbReference type="BioGRID" id="122139">
    <property type="interactions" value="11"/>
</dbReference>
<dbReference type="FunCoup" id="Q9BYH8">
    <property type="interactions" value="932"/>
</dbReference>
<dbReference type="IntAct" id="Q9BYH8">
    <property type="interactions" value="6"/>
</dbReference>
<dbReference type="MINT" id="Q9BYH8"/>
<dbReference type="STRING" id="9606.ENSP00000325663"/>
<dbReference type="GlyGen" id="Q9BYH8">
    <property type="glycosylation" value="1 site"/>
</dbReference>
<dbReference type="iPTMnet" id="Q9BYH8"/>
<dbReference type="PhosphoSitePlus" id="Q9BYH8"/>
<dbReference type="BioMuta" id="NFKBIZ"/>
<dbReference type="DMDM" id="74752456"/>
<dbReference type="jPOST" id="Q9BYH8"/>
<dbReference type="MassIVE" id="Q9BYH8"/>
<dbReference type="PaxDb" id="9606-ENSP00000325663"/>
<dbReference type="PeptideAtlas" id="Q9BYH8"/>
<dbReference type="ProteomicsDB" id="79649">
    <molecule id="Q9BYH8-1"/>
</dbReference>
<dbReference type="ProteomicsDB" id="79650">
    <molecule id="Q9BYH8-2"/>
</dbReference>
<dbReference type="ProteomicsDB" id="79651">
    <molecule id="Q9BYH8-3"/>
</dbReference>
<dbReference type="Antibodypedia" id="2134">
    <property type="antibodies" value="199 antibodies from 26 providers"/>
</dbReference>
<dbReference type="DNASU" id="64332"/>
<dbReference type="Ensembl" id="ENST00000326151.9">
    <molecule id="Q9BYH8-3"/>
    <property type="protein sequence ID" value="ENSP00000325593.5"/>
    <property type="gene ID" value="ENSG00000144802.11"/>
</dbReference>
<dbReference type="Ensembl" id="ENST00000326172.9">
    <molecule id="Q9BYH8-1"/>
    <property type="protein sequence ID" value="ENSP00000325663.5"/>
    <property type="gene ID" value="ENSG00000144802.11"/>
</dbReference>
<dbReference type="Ensembl" id="ENST00000394054.6">
    <molecule id="Q9BYH8-2"/>
    <property type="protein sequence ID" value="ENSP00000377618.2"/>
    <property type="gene ID" value="ENSG00000144802.11"/>
</dbReference>
<dbReference type="GeneID" id="64332"/>
<dbReference type="KEGG" id="hsa:64332"/>
<dbReference type="MANE-Select" id="ENST00000326172.9">
    <property type="protein sequence ID" value="ENSP00000325663.5"/>
    <property type="RefSeq nucleotide sequence ID" value="NM_031419.4"/>
    <property type="RefSeq protein sequence ID" value="NP_113607.1"/>
</dbReference>
<dbReference type="UCSC" id="uc003dvo.4">
    <molecule id="Q9BYH8-1"/>
    <property type="organism name" value="human"/>
</dbReference>
<dbReference type="AGR" id="HGNC:29805"/>
<dbReference type="CTD" id="64332"/>
<dbReference type="DisGeNET" id="64332"/>
<dbReference type="GeneCards" id="NFKBIZ"/>
<dbReference type="HGNC" id="HGNC:29805">
    <property type="gene designation" value="NFKBIZ"/>
</dbReference>
<dbReference type="HPA" id="ENSG00000144802">
    <property type="expression patterns" value="Tissue enriched (bone)"/>
</dbReference>
<dbReference type="MIM" id="608004">
    <property type="type" value="gene"/>
</dbReference>
<dbReference type="neXtProt" id="NX_Q9BYH8"/>
<dbReference type="OpenTargets" id="ENSG00000144802"/>
<dbReference type="PharmGKB" id="PA134990505"/>
<dbReference type="VEuPathDB" id="HostDB:ENSG00000144802"/>
<dbReference type="eggNOG" id="KOG0504">
    <property type="taxonomic scope" value="Eukaryota"/>
</dbReference>
<dbReference type="GeneTree" id="ENSGT00940000153695"/>
<dbReference type="HOGENOM" id="CLU_030240_0_0_1"/>
<dbReference type="InParanoid" id="Q9BYH8"/>
<dbReference type="OMA" id="QFSWMSP"/>
<dbReference type="OrthoDB" id="341259at2759"/>
<dbReference type="PAN-GO" id="Q9BYH8">
    <property type="GO annotations" value="2 GO annotations based on evolutionary models"/>
</dbReference>
<dbReference type="PhylomeDB" id="Q9BYH8"/>
<dbReference type="TreeFam" id="TF330224"/>
<dbReference type="PathwayCommons" id="Q9BYH8"/>
<dbReference type="SignaLink" id="Q9BYH8"/>
<dbReference type="SIGNOR" id="Q9BYH8"/>
<dbReference type="BioGRID-ORCS" id="64332">
    <property type="hits" value="6 hits in 1159 CRISPR screens"/>
</dbReference>
<dbReference type="ChiTaRS" id="NFKBIZ">
    <property type="organism name" value="human"/>
</dbReference>
<dbReference type="GeneWiki" id="NFKBIZ"/>
<dbReference type="GenomeRNAi" id="64332"/>
<dbReference type="Pharos" id="Q9BYH8">
    <property type="development level" value="Tbio"/>
</dbReference>
<dbReference type="PRO" id="PR:Q9BYH8"/>
<dbReference type="Proteomes" id="UP000005640">
    <property type="component" value="Chromosome 3"/>
</dbReference>
<dbReference type="RNAct" id="Q9BYH8">
    <property type="molecule type" value="protein"/>
</dbReference>
<dbReference type="Bgee" id="ENSG00000144802">
    <property type="expression patterns" value="Expressed in epithelial cell of pancreas and 181 other cell types or tissues"/>
</dbReference>
<dbReference type="ExpressionAtlas" id="Q9BYH8">
    <property type="expression patterns" value="baseline and differential"/>
</dbReference>
<dbReference type="GO" id="GO:0036464">
    <property type="term" value="C:cytoplasmic ribonucleoprotein granule"/>
    <property type="evidence" value="ECO:0000314"/>
    <property type="project" value="HPA"/>
</dbReference>
<dbReference type="GO" id="GO:0016607">
    <property type="term" value="C:nuclear speck"/>
    <property type="evidence" value="ECO:0000314"/>
    <property type="project" value="HPA"/>
</dbReference>
<dbReference type="GO" id="GO:0005634">
    <property type="term" value="C:nucleus"/>
    <property type="evidence" value="ECO:0000318"/>
    <property type="project" value="GO_Central"/>
</dbReference>
<dbReference type="GO" id="GO:0070974">
    <property type="term" value="F:POU domain binding"/>
    <property type="evidence" value="ECO:0007669"/>
    <property type="project" value="InterPro"/>
</dbReference>
<dbReference type="GO" id="GO:0000978">
    <property type="term" value="F:RNA polymerase II cis-regulatory region sequence-specific DNA binding"/>
    <property type="evidence" value="ECO:0007669"/>
    <property type="project" value="Ensembl"/>
</dbReference>
<dbReference type="GO" id="GO:0003712">
    <property type="term" value="F:transcription coregulator activity"/>
    <property type="evidence" value="ECO:0007669"/>
    <property type="project" value="Ensembl"/>
</dbReference>
<dbReference type="GO" id="GO:0042100">
    <property type="term" value="P:B cell proliferation"/>
    <property type="evidence" value="ECO:0007669"/>
    <property type="project" value="Ensembl"/>
</dbReference>
<dbReference type="GO" id="GO:1990117">
    <property type="term" value="P:B cell receptor apoptotic signaling pathway"/>
    <property type="evidence" value="ECO:0007669"/>
    <property type="project" value="Ensembl"/>
</dbReference>
<dbReference type="GO" id="GO:0097398">
    <property type="term" value="P:cellular response to interleukin-17"/>
    <property type="evidence" value="ECO:0007669"/>
    <property type="project" value="Ensembl"/>
</dbReference>
<dbReference type="GO" id="GO:0071222">
    <property type="term" value="P:cellular response to lipopolysaccharide"/>
    <property type="evidence" value="ECO:0007669"/>
    <property type="project" value="Ensembl"/>
</dbReference>
<dbReference type="GO" id="GO:0071560">
    <property type="term" value="P:cellular response to transforming growth factor beta stimulus"/>
    <property type="evidence" value="ECO:0007669"/>
    <property type="project" value="Ensembl"/>
</dbReference>
<dbReference type="GO" id="GO:0006338">
    <property type="term" value="P:chromatin remodeling"/>
    <property type="evidence" value="ECO:0007669"/>
    <property type="project" value="Ensembl"/>
</dbReference>
<dbReference type="GO" id="GO:0002544">
    <property type="term" value="P:chronic inflammatory response"/>
    <property type="evidence" value="ECO:0007669"/>
    <property type="project" value="Ensembl"/>
</dbReference>
<dbReference type="GO" id="GO:0019221">
    <property type="term" value="P:cytokine-mediated signaling pathway"/>
    <property type="evidence" value="ECO:0007669"/>
    <property type="project" value="Ensembl"/>
</dbReference>
<dbReference type="GO" id="GO:0050829">
    <property type="term" value="P:defense response to Gram-negative bacterium"/>
    <property type="evidence" value="ECO:0007669"/>
    <property type="project" value="Ensembl"/>
</dbReference>
<dbReference type="GO" id="GO:1904019">
    <property type="term" value="P:epithelial cell apoptotic process"/>
    <property type="evidence" value="ECO:0007669"/>
    <property type="project" value="Ensembl"/>
</dbReference>
<dbReference type="GO" id="GO:0061436">
    <property type="term" value="P:establishment of skin barrier"/>
    <property type="evidence" value="ECO:0007669"/>
    <property type="project" value="Ensembl"/>
</dbReference>
<dbReference type="GO" id="GO:0097194">
    <property type="term" value="P:execution phase of apoptosis"/>
    <property type="evidence" value="ECO:0007669"/>
    <property type="project" value="Ensembl"/>
</dbReference>
<dbReference type="GO" id="GO:0048873">
    <property type="term" value="P:homeostasis of number of cells within a tissue"/>
    <property type="evidence" value="ECO:0007669"/>
    <property type="project" value="Ensembl"/>
</dbReference>
<dbReference type="GO" id="GO:0090594">
    <property type="term" value="P:inflammatory response to wounding"/>
    <property type="evidence" value="ECO:0007669"/>
    <property type="project" value="Ensembl"/>
</dbReference>
<dbReference type="GO" id="GO:0045190">
    <property type="term" value="P:isotype switching"/>
    <property type="evidence" value="ECO:0007669"/>
    <property type="project" value="Ensembl"/>
</dbReference>
<dbReference type="GO" id="GO:0032980">
    <property type="term" value="P:keratinocyte activation"/>
    <property type="evidence" value="ECO:0007669"/>
    <property type="project" value="Ensembl"/>
</dbReference>
<dbReference type="GO" id="GO:0030216">
    <property type="term" value="P:keratinocyte differentiation"/>
    <property type="evidence" value="ECO:0007669"/>
    <property type="project" value="Ensembl"/>
</dbReference>
<dbReference type="GO" id="GO:0043616">
    <property type="term" value="P:keratinocyte proliferation"/>
    <property type="evidence" value="ECO:0007669"/>
    <property type="project" value="Ensembl"/>
</dbReference>
<dbReference type="GO" id="GO:0042789">
    <property type="term" value="P:mRNA transcription by RNA polymerase II"/>
    <property type="evidence" value="ECO:0007669"/>
    <property type="project" value="Ensembl"/>
</dbReference>
<dbReference type="GO" id="GO:0002317">
    <property type="term" value="P:plasma cell differentiation"/>
    <property type="evidence" value="ECO:0007669"/>
    <property type="project" value="Ensembl"/>
</dbReference>
<dbReference type="GO" id="GO:0050729">
    <property type="term" value="P:positive regulation of inflammatory response"/>
    <property type="evidence" value="ECO:0000315"/>
    <property type="project" value="ARUK-UCL"/>
</dbReference>
<dbReference type="GO" id="GO:2000321">
    <property type="term" value="P:positive regulation of T-helper 17 cell differentiation"/>
    <property type="evidence" value="ECO:0000250"/>
    <property type="project" value="UniProtKB"/>
</dbReference>
<dbReference type="GO" id="GO:0045944">
    <property type="term" value="P:positive regulation of transcription by RNA polymerase II"/>
    <property type="evidence" value="ECO:0007669"/>
    <property type="project" value="Ensembl"/>
</dbReference>
<dbReference type="GO" id="GO:0010468">
    <property type="term" value="P:regulation of gene expression"/>
    <property type="evidence" value="ECO:0000318"/>
    <property type="project" value="GO_Central"/>
</dbReference>
<dbReference type="GO" id="GO:0072718">
    <property type="term" value="P:response to cisplatin"/>
    <property type="evidence" value="ECO:0007669"/>
    <property type="project" value="Ensembl"/>
</dbReference>
<dbReference type="GO" id="GO:0051593">
    <property type="term" value="P:response to folic acid"/>
    <property type="evidence" value="ECO:0007669"/>
    <property type="project" value="Ensembl"/>
</dbReference>
<dbReference type="GO" id="GO:0140459">
    <property type="term" value="P:response to Gram-positive bacterium"/>
    <property type="evidence" value="ECO:0007669"/>
    <property type="project" value="Ensembl"/>
</dbReference>
<dbReference type="GO" id="GO:0009410">
    <property type="term" value="P:response to xenobiotic stimulus"/>
    <property type="evidence" value="ECO:0007669"/>
    <property type="project" value="Ensembl"/>
</dbReference>
<dbReference type="GO" id="GO:0048536">
    <property type="term" value="P:spleen development"/>
    <property type="evidence" value="ECO:0007669"/>
    <property type="project" value="Ensembl"/>
</dbReference>
<dbReference type="GO" id="GO:0002456">
    <property type="term" value="P:T cell mediated immunity"/>
    <property type="evidence" value="ECO:0007669"/>
    <property type="project" value="Ensembl"/>
</dbReference>
<dbReference type="GO" id="GO:0050852">
    <property type="term" value="P:T cell receptor signaling pathway"/>
    <property type="evidence" value="ECO:0000250"/>
    <property type="project" value="UniProtKB"/>
</dbReference>
<dbReference type="GO" id="GO:0045063">
    <property type="term" value="P:T-helper 1 cell differentiation"/>
    <property type="evidence" value="ECO:0007669"/>
    <property type="project" value="Ensembl"/>
</dbReference>
<dbReference type="GO" id="GO:0072539">
    <property type="term" value="P:T-helper 17 cell differentiation"/>
    <property type="evidence" value="ECO:0007669"/>
    <property type="project" value="Ensembl"/>
</dbReference>
<dbReference type="GO" id="GO:0002224">
    <property type="term" value="P:toll-like receptor signaling pathway"/>
    <property type="evidence" value="ECO:0007669"/>
    <property type="project" value="Ensembl"/>
</dbReference>
<dbReference type="GO" id="GO:0070897">
    <property type="term" value="P:transcription preinitiation complex assembly"/>
    <property type="evidence" value="ECO:0007669"/>
    <property type="project" value="Ensembl"/>
</dbReference>
<dbReference type="FunFam" id="1.25.40.20:FF:000179">
    <property type="entry name" value="NF-kappa-B inhibitor zeta isoform X2"/>
    <property type="match status" value="1"/>
</dbReference>
<dbReference type="FunFam" id="1.25.40.20:FF:000188">
    <property type="entry name" value="NF-kappa-B inhibitor zeta isoform X2"/>
    <property type="match status" value="1"/>
</dbReference>
<dbReference type="Gene3D" id="1.25.40.20">
    <property type="entry name" value="Ankyrin repeat-containing domain"/>
    <property type="match status" value="1"/>
</dbReference>
<dbReference type="InterPro" id="IPR002110">
    <property type="entry name" value="Ankyrin_rpt"/>
</dbReference>
<dbReference type="InterPro" id="IPR036770">
    <property type="entry name" value="Ankyrin_rpt-contain_sf"/>
</dbReference>
<dbReference type="InterPro" id="IPR047571">
    <property type="entry name" value="OCA"/>
</dbReference>
<dbReference type="PANTHER" id="PTHR24124">
    <property type="entry name" value="ANKYRIN REPEAT FAMILY A"/>
    <property type="match status" value="1"/>
</dbReference>
<dbReference type="PANTHER" id="PTHR24124:SF5">
    <property type="entry name" value="NF-KAPPA-B INHIBITOR ZETA"/>
    <property type="match status" value="1"/>
</dbReference>
<dbReference type="Pfam" id="PF12796">
    <property type="entry name" value="Ank_2"/>
    <property type="match status" value="2"/>
</dbReference>
<dbReference type="PRINTS" id="PR01415">
    <property type="entry name" value="ANKYRIN"/>
</dbReference>
<dbReference type="SMART" id="SM00248">
    <property type="entry name" value="ANK"/>
    <property type="match status" value="6"/>
</dbReference>
<dbReference type="SUPFAM" id="SSF48403">
    <property type="entry name" value="Ankyrin repeat"/>
    <property type="match status" value="1"/>
</dbReference>
<dbReference type="PROSITE" id="PS50297">
    <property type="entry name" value="ANK_REP_REGION"/>
    <property type="match status" value="1"/>
</dbReference>
<dbReference type="PROSITE" id="PS50088">
    <property type="entry name" value="ANK_REPEAT"/>
    <property type="match status" value="3"/>
</dbReference>
<dbReference type="PROSITE" id="PS52003">
    <property type="entry name" value="OCA"/>
    <property type="match status" value="1"/>
</dbReference>